<organism>
    <name type="scientific">Bacillus pumilus (strain SAFR-032)</name>
    <dbReference type="NCBI Taxonomy" id="315750"/>
    <lineage>
        <taxon>Bacteria</taxon>
        <taxon>Bacillati</taxon>
        <taxon>Bacillota</taxon>
        <taxon>Bacilli</taxon>
        <taxon>Bacillales</taxon>
        <taxon>Bacillaceae</taxon>
        <taxon>Bacillus</taxon>
    </lineage>
</organism>
<evidence type="ECO:0000255" key="1">
    <source>
        <dbReference type="HAMAP-Rule" id="MF_00600"/>
    </source>
</evidence>
<accession>A8FAG3</accession>
<name>CH60_BACP2</name>
<sequence length="544" mass="57404">MAKDIKFSEEARRAMLRGVDALADAVKVTLGPKGRNVVLEKKFGSPLITNDGVTIAKEIELEDAFENMGAKLVAEVASKTNDVAGDGTTTATVLAQAMIREGLKNVTAGANPVGVRKGIEEAVKVALEGLHEISKPIEGKESIAQVASISAADEEVGSLIAEAMERVGNDGVITIEESKGFTTELEVVEGMQFDRGYASPYMVTDSDKMEAVLENPYILITDKKITNIQEILPVLEQVVQQGKPLLLIAEDVEGEALATLVVNKLRGTFNAVAVKAPGFGDRRKAMLEDISVLTGGELITEDLGLDLKSTEIGQLGRASKVVVTKENTTIVEGSGDSAQIAARVNQIRAQVEETTSEFDKEKLQERLAKLAGGVAVIKVGAATETELKERKLRIEDALNSTRAAVEEGIVSGGGTALVNVYKKVASIEADGDVQTGVNIVLRSLEEPIRQIAHNAGLEGSVIVERLKNEEIGVGFNAATNEWVNMIEKGIVDPTKVTRSALQNAASVAAMLLTTEAVVADKPEEGGSGGGMPDMGGMGGMGGMM</sequence>
<gene>
    <name evidence="1" type="primary">groEL</name>
    <name evidence="1" type="synonym">groL</name>
    <name type="ordered locus">BPUM_0535</name>
</gene>
<keyword id="KW-0067">ATP-binding</keyword>
<keyword id="KW-0143">Chaperone</keyword>
<keyword id="KW-0963">Cytoplasm</keyword>
<keyword id="KW-0413">Isomerase</keyword>
<keyword id="KW-0547">Nucleotide-binding</keyword>
<dbReference type="EC" id="5.6.1.7" evidence="1"/>
<dbReference type="EMBL" id="CP000813">
    <property type="protein sequence ID" value="ABV61230.1"/>
    <property type="molecule type" value="Genomic_DNA"/>
</dbReference>
<dbReference type="RefSeq" id="WP_012009082.1">
    <property type="nucleotide sequence ID" value="NZ_VEHD01000043.1"/>
</dbReference>
<dbReference type="SMR" id="A8FAG3"/>
<dbReference type="STRING" id="315750.BPUM_0535"/>
<dbReference type="GeneID" id="5619783"/>
<dbReference type="KEGG" id="bpu:BPUM_0535"/>
<dbReference type="eggNOG" id="COG0459">
    <property type="taxonomic scope" value="Bacteria"/>
</dbReference>
<dbReference type="HOGENOM" id="CLU_016503_3_0_9"/>
<dbReference type="OrthoDB" id="9766614at2"/>
<dbReference type="Proteomes" id="UP000001355">
    <property type="component" value="Chromosome"/>
</dbReference>
<dbReference type="GO" id="GO:0005737">
    <property type="term" value="C:cytoplasm"/>
    <property type="evidence" value="ECO:0007669"/>
    <property type="project" value="UniProtKB-SubCell"/>
</dbReference>
<dbReference type="GO" id="GO:0005524">
    <property type="term" value="F:ATP binding"/>
    <property type="evidence" value="ECO:0007669"/>
    <property type="project" value="UniProtKB-UniRule"/>
</dbReference>
<dbReference type="GO" id="GO:0140662">
    <property type="term" value="F:ATP-dependent protein folding chaperone"/>
    <property type="evidence" value="ECO:0007669"/>
    <property type="project" value="InterPro"/>
</dbReference>
<dbReference type="GO" id="GO:0016853">
    <property type="term" value="F:isomerase activity"/>
    <property type="evidence" value="ECO:0007669"/>
    <property type="project" value="UniProtKB-KW"/>
</dbReference>
<dbReference type="GO" id="GO:0051082">
    <property type="term" value="F:unfolded protein binding"/>
    <property type="evidence" value="ECO:0007669"/>
    <property type="project" value="UniProtKB-UniRule"/>
</dbReference>
<dbReference type="GO" id="GO:0042026">
    <property type="term" value="P:protein refolding"/>
    <property type="evidence" value="ECO:0007669"/>
    <property type="project" value="UniProtKB-UniRule"/>
</dbReference>
<dbReference type="CDD" id="cd03344">
    <property type="entry name" value="GroEL"/>
    <property type="match status" value="1"/>
</dbReference>
<dbReference type="FunFam" id="1.10.560.10:FF:000001">
    <property type="entry name" value="60 kDa chaperonin"/>
    <property type="match status" value="1"/>
</dbReference>
<dbReference type="FunFam" id="3.50.7.10:FF:000001">
    <property type="entry name" value="60 kDa chaperonin"/>
    <property type="match status" value="1"/>
</dbReference>
<dbReference type="Gene3D" id="3.50.7.10">
    <property type="entry name" value="GroEL"/>
    <property type="match status" value="1"/>
</dbReference>
<dbReference type="Gene3D" id="1.10.560.10">
    <property type="entry name" value="GroEL-like equatorial domain"/>
    <property type="match status" value="1"/>
</dbReference>
<dbReference type="Gene3D" id="3.30.260.10">
    <property type="entry name" value="TCP-1-like chaperonin intermediate domain"/>
    <property type="match status" value="1"/>
</dbReference>
<dbReference type="HAMAP" id="MF_00600">
    <property type="entry name" value="CH60"/>
    <property type="match status" value="1"/>
</dbReference>
<dbReference type="InterPro" id="IPR018370">
    <property type="entry name" value="Chaperonin_Cpn60_CS"/>
</dbReference>
<dbReference type="InterPro" id="IPR001844">
    <property type="entry name" value="Cpn60/GroEL"/>
</dbReference>
<dbReference type="InterPro" id="IPR002423">
    <property type="entry name" value="Cpn60/GroEL/TCP-1"/>
</dbReference>
<dbReference type="InterPro" id="IPR027409">
    <property type="entry name" value="GroEL-like_apical_dom_sf"/>
</dbReference>
<dbReference type="InterPro" id="IPR027413">
    <property type="entry name" value="GROEL-like_equatorial_sf"/>
</dbReference>
<dbReference type="InterPro" id="IPR027410">
    <property type="entry name" value="TCP-1-like_intermed_sf"/>
</dbReference>
<dbReference type="NCBIfam" id="TIGR02348">
    <property type="entry name" value="GroEL"/>
    <property type="match status" value="1"/>
</dbReference>
<dbReference type="NCBIfam" id="NF000592">
    <property type="entry name" value="PRK00013.1"/>
    <property type="match status" value="1"/>
</dbReference>
<dbReference type="NCBIfam" id="NF009487">
    <property type="entry name" value="PRK12849.1"/>
    <property type="match status" value="1"/>
</dbReference>
<dbReference type="NCBIfam" id="NF009488">
    <property type="entry name" value="PRK12850.1"/>
    <property type="match status" value="1"/>
</dbReference>
<dbReference type="NCBIfam" id="NF009489">
    <property type="entry name" value="PRK12851.1"/>
    <property type="match status" value="1"/>
</dbReference>
<dbReference type="PANTHER" id="PTHR45633">
    <property type="entry name" value="60 KDA HEAT SHOCK PROTEIN, MITOCHONDRIAL"/>
    <property type="match status" value="1"/>
</dbReference>
<dbReference type="Pfam" id="PF00118">
    <property type="entry name" value="Cpn60_TCP1"/>
    <property type="match status" value="1"/>
</dbReference>
<dbReference type="PRINTS" id="PR00298">
    <property type="entry name" value="CHAPERONIN60"/>
</dbReference>
<dbReference type="SUPFAM" id="SSF52029">
    <property type="entry name" value="GroEL apical domain-like"/>
    <property type="match status" value="1"/>
</dbReference>
<dbReference type="SUPFAM" id="SSF48592">
    <property type="entry name" value="GroEL equatorial domain-like"/>
    <property type="match status" value="1"/>
</dbReference>
<dbReference type="SUPFAM" id="SSF54849">
    <property type="entry name" value="GroEL-intermediate domain like"/>
    <property type="match status" value="1"/>
</dbReference>
<dbReference type="PROSITE" id="PS00296">
    <property type="entry name" value="CHAPERONINS_CPN60"/>
    <property type="match status" value="1"/>
</dbReference>
<proteinExistence type="inferred from homology"/>
<feature type="chain" id="PRO_1000061253" description="Chaperonin GroEL">
    <location>
        <begin position="1"/>
        <end position="544"/>
    </location>
</feature>
<feature type="binding site" evidence="1">
    <location>
        <begin position="29"/>
        <end position="32"/>
    </location>
    <ligand>
        <name>ATP</name>
        <dbReference type="ChEBI" id="CHEBI:30616"/>
    </ligand>
</feature>
<feature type="binding site" evidence="1">
    <location>
        <begin position="86"/>
        <end position="90"/>
    </location>
    <ligand>
        <name>ATP</name>
        <dbReference type="ChEBI" id="CHEBI:30616"/>
    </ligand>
</feature>
<feature type="binding site" evidence="1">
    <location>
        <position position="413"/>
    </location>
    <ligand>
        <name>ATP</name>
        <dbReference type="ChEBI" id="CHEBI:30616"/>
    </ligand>
</feature>
<feature type="binding site" evidence="1">
    <location>
        <begin position="476"/>
        <end position="478"/>
    </location>
    <ligand>
        <name>ATP</name>
        <dbReference type="ChEBI" id="CHEBI:30616"/>
    </ligand>
</feature>
<feature type="binding site" evidence="1">
    <location>
        <position position="492"/>
    </location>
    <ligand>
        <name>ATP</name>
        <dbReference type="ChEBI" id="CHEBI:30616"/>
    </ligand>
</feature>
<comment type="function">
    <text evidence="1">Together with its co-chaperonin GroES, plays an essential role in assisting protein folding. The GroEL-GroES system forms a nano-cage that allows encapsulation of the non-native substrate proteins and provides a physical environment optimized to promote and accelerate protein folding.</text>
</comment>
<comment type="catalytic activity">
    <reaction evidence="1">
        <text>ATP + H2O + a folded polypeptide = ADP + phosphate + an unfolded polypeptide.</text>
        <dbReference type="EC" id="5.6.1.7"/>
    </reaction>
</comment>
<comment type="subunit">
    <text evidence="1">Forms a cylinder of 14 subunits composed of two heptameric rings stacked back-to-back. Interacts with the co-chaperonin GroES.</text>
</comment>
<comment type="subcellular location">
    <subcellularLocation>
        <location evidence="1">Cytoplasm</location>
    </subcellularLocation>
</comment>
<comment type="similarity">
    <text evidence="1">Belongs to the chaperonin (HSP60) family.</text>
</comment>
<reference key="1">
    <citation type="journal article" date="2007" name="PLoS ONE">
        <title>Paradoxical DNA repair and peroxide resistance gene conservation in Bacillus pumilus SAFR-032.</title>
        <authorList>
            <person name="Gioia J."/>
            <person name="Yerrapragada S."/>
            <person name="Qin X."/>
            <person name="Jiang H."/>
            <person name="Igboeli O.C."/>
            <person name="Muzny D."/>
            <person name="Dugan-Rocha S."/>
            <person name="Ding Y."/>
            <person name="Hawes A."/>
            <person name="Liu W."/>
            <person name="Perez L."/>
            <person name="Kovar C."/>
            <person name="Dinh H."/>
            <person name="Lee S."/>
            <person name="Nazareth L."/>
            <person name="Blyth P."/>
            <person name="Holder M."/>
            <person name="Buhay C."/>
            <person name="Tirumalai M.R."/>
            <person name="Liu Y."/>
            <person name="Dasgupta I."/>
            <person name="Bokhetache L."/>
            <person name="Fujita M."/>
            <person name="Karouia F."/>
            <person name="Eswara Moorthy P."/>
            <person name="Siefert J."/>
            <person name="Uzman A."/>
            <person name="Buzumbo P."/>
            <person name="Verma A."/>
            <person name="Zwiya H."/>
            <person name="McWilliams B.D."/>
            <person name="Olowu A."/>
            <person name="Clinkenbeard K.D."/>
            <person name="Newcombe D."/>
            <person name="Golebiewski L."/>
            <person name="Petrosino J.F."/>
            <person name="Nicholson W.L."/>
            <person name="Fox G.E."/>
            <person name="Venkateswaran K."/>
            <person name="Highlander S.K."/>
            <person name="Weinstock G.M."/>
        </authorList>
    </citation>
    <scope>NUCLEOTIDE SEQUENCE [LARGE SCALE GENOMIC DNA]</scope>
    <source>
        <strain>SAFR-032</strain>
    </source>
</reference>
<protein>
    <recommendedName>
        <fullName evidence="1">Chaperonin GroEL</fullName>
        <ecNumber evidence="1">5.6.1.7</ecNumber>
    </recommendedName>
    <alternativeName>
        <fullName evidence="1">60 kDa chaperonin</fullName>
    </alternativeName>
    <alternativeName>
        <fullName evidence="1">Chaperonin-60</fullName>
        <shortName evidence="1">Cpn60</shortName>
    </alternativeName>
</protein>